<keyword id="KW-0131">Cell cycle</keyword>
<keyword id="KW-0132">Cell division</keyword>
<keyword id="KW-0963">Cytoplasm</keyword>
<keyword id="KW-1185">Reference proteome</keyword>
<keyword id="KW-0717">Septation</keyword>
<dbReference type="EMBL" id="AE016825">
    <property type="protein sequence ID" value="AAQ61486.1"/>
    <property type="molecule type" value="Genomic_DNA"/>
</dbReference>
<dbReference type="RefSeq" id="WP_011137371.1">
    <property type="nucleotide sequence ID" value="NC_005085.1"/>
</dbReference>
<dbReference type="SMR" id="P60012"/>
<dbReference type="STRING" id="243365.CV_3824"/>
<dbReference type="GeneID" id="66365059"/>
<dbReference type="KEGG" id="cvi:CV_3824"/>
<dbReference type="eggNOG" id="COG4582">
    <property type="taxonomic scope" value="Bacteria"/>
</dbReference>
<dbReference type="HOGENOM" id="CLU_076303_0_1_4"/>
<dbReference type="OrthoDB" id="5294622at2"/>
<dbReference type="Proteomes" id="UP000001424">
    <property type="component" value="Chromosome"/>
</dbReference>
<dbReference type="GO" id="GO:0032153">
    <property type="term" value="C:cell division site"/>
    <property type="evidence" value="ECO:0007669"/>
    <property type="project" value="TreeGrafter"/>
</dbReference>
<dbReference type="GO" id="GO:0005737">
    <property type="term" value="C:cytoplasm"/>
    <property type="evidence" value="ECO:0007669"/>
    <property type="project" value="UniProtKB-SubCell"/>
</dbReference>
<dbReference type="GO" id="GO:0000917">
    <property type="term" value="P:division septum assembly"/>
    <property type="evidence" value="ECO:0007669"/>
    <property type="project" value="UniProtKB-KW"/>
</dbReference>
<dbReference type="GO" id="GO:0043093">
    <property type="term" value="P:FtsZ-dependent cytokinesis"/>
    <property type="evidence" value="ECO:0007669"/>
    <property type="project" value="UniProtKB-UniRule"/>
</dbReference>
<dbReference type="Gene3D" id="1.10.3900.10">
    <property type="entry name" value="YacF-like"/>
    <property type="match status" value="1"/>
</dbReference>
<dbReference type="Gene3D" id="2.60.440.10">
    <property type="entry name" value="YacF-like domains"/>
    <property type="match status" value="1"/>
</dbReference>
<dbReference type="HAMAP" id="MF_01092">
    <property type="entry name" value="ZapD"/>
    <property type="match status" value="1"/>
</dbReference>
<dbReference type="InterPro" id="IPR009777">
    <property type="entry name" value="ZapD"/>
</dbReference>
<dbReference type="InterPro" id="IPR027462">
    <property type="entry name" value="ZapD_C"/>
</dbReference>
<dbReference type="InterPro" id="IPR036268">
    <property type="entry name" value="ZapD_sf"/>
</dbReference>
<dbReference type="NCBIfam" id="NF003656">
    <property type="entry name" value="PRK05287.1-4"/>
    <property type="match status" value="1"/>
</dbReference>
<dbReference type="PANTHER" id="PTHR39455">
    <property type="entry name" value="CELL DIVISION PROTEIN ZAPD"/>
    <property type="match status" value="1"/>
</dbReference>
<dbReference type="PANTHER" id="PTHR39455:SF1">
    <property type="entry name" value="CELL DIVISION PROTEIN ZAPD"/>
    <property type="match status" value="1"/>
</dbReference>
<dbReference type="Pfam" id="PF07072">
    <property type="entry name" value="ZapD"/>
    <property type="match status" value="1"/>
</dbReference>
<dbReference type="SUPFAM" id="SSF160950">
    <property type="entry name" value="YacF-like"/>
    <property type="match status" value="1"/>
</dbReference>
<comment type="function">
    <text evidence="1">Cell division factor that enhances FtsZ-ring assembly. Directly interacts with FtsZ and promotes bundling of FtsZ protofilaments, with a reduction in FtsZ GTPase activity.</text>
</comment>
<comment type="subunit">
    <text evidence="1">Interacts with FtsZ.</text>
</comment>
<comment type="subcellular location">
    <subcellularLocation>
        <location evidence="1">Cytoplasm</location>
    </subcellularLocation>
    <text evidence="1">Localizes to mid-cell in an FtsZ-dependent manner.</text>
</comment>
<comment type="similarity">
    <text evidence="1">Belongs to the ZapD family.</text>
</comment>
<feature type="chain" id="PRO_0000211665" description="Cell division protein ZapD">
    <location>
        <begin position="1"/>
        <end position="252"/>
    </location>
</feature>
<gene>
    <name evidence="1" type="primary">zapD</name>
    <name type="ordered locus">CV_3824</name>
</gene>
<name>ZAPD_CHRVO</name>
<reference key="1">
    <citation type="journal article" date="2003" name="Proc. Natl. Acad. Sci. U.S.A.">
        <title>The complete genome sequence of Chromobacterium violaceum reveals remarkable and exploitable bacterial adaptability.</title>
        <authorList>
            <person name="Vasconcelos A.T.R."/>
            <person name="de Almeida D.F."/>
            <person name="Hungria M."/>
            <person name="Guimaraes C.T."/>
            <person name="Antonio R.V."/>
            <person name="Almeida F.C."/>
            <person name="de Almeida L.G.P."/>
            <person name="de Almeida R."/>
            <person name="Alves-Gomes J.A."/>
            <person name="Andrade E.M."/>
            <person name="Araripe J."/>
            <person name="de Araujo M.F.F."/>
            <person name="Astolfi-Filho S."/>
            <person name="Azevedo V."/>
            <person name="Baptista A.J."/>
            <person name="Bataus L.A.M."/>
            <person name="Batista J.S."/>
            <person name="Belo A."/>
            <person name="van den Berg C."/>
            <person name="Bogo M."/>
            <person name="Bonatto S."/>
            <person name="Bordignon J."/>
            <person name="Brigido M.M."/>
            <person name="Brito C.A."/>
            <person name="Brocchi M."/>
            <person name="Burity H.A."/>
            <person name="Camargo A.A."/>
            <person name="Cardoso D.D.P."/>
            <person name="Carneiro N.P."/>
            <person name="Carraro D.M."/>
            <person name="Carvalho C.M.B."/>
            <person name="Cascardo J.C.M."/>
            <person name="Cavada B.S."/>
            <person name="Chueire L.M.O."/>
            <person name="Creczynski-Pasa T.B."/>
            <person name="Cunha-Junior N.C."/>
            <person name="Fagundes N."/>
            <person name="Falcao C.L."/>
            <person name="Fantinatti F."/>
            <person name="Farias I.P."/>
            <person name="Felipe M.S.S."/>
            <person name="Ferrari L.P."/>
            <person name="Ferro J.A."/>
            <person name="Ferro M.I.T."/>
            <person name="Franco G.R."/>
            <person name="Freitas N.S.A."/>
            <person name="Furlan L.R."/>
            <person name="Gazzinelli R.T."/>
            <person name="Gomes E.A."/>
            <person name="Goncalves P.R."/>
            <person name="Grangeiro T.B."/>
            <person name="Grattapaglia D."/>
            <person name="Grisard E.C."/>
            <person name="Hanna E.S."/>
            <person name="Jardim S.N."/>
            <person name="Laurino J."/>
            <person name="Leoi L.C.T."/>
            <person name="Lima L.F.A."/>
            <person name="Loureiro M.F."/>
            <person name="Lyra M.C.C.P."/>
            <person name="Madeira H.M.F."/>
            <person name="Manfio G.P."/>
            <person name="Maranhao A.Q."/>
            <person name="Martins W.S."/>
            <person name="di Mauro S.M.Z."/>
            <person name="de Medeiros S.R.B."/>
            <person name="Meissner R.V."/>
            <person name="Moreira M.A.M."/>
            <person name="Nascimento F.F."/>
            <person name="Nicolas M.F."/>
            <person name="Oliveira J.G."/>
            <person name="Oliveira S.C."/>
            <person name="Paixao R.F.C."/>
            <person name="Parente J.A."/>
            <person name="Pedrosa F.O."/>
            <person name="Pena S.D.J."/>
            <person name="Pereira J.O."/>
            <person name="Pereira M."/>
            <person name="Pinto L.S.R.C."/>
            <person name="Pinto L.S."/>
            <person name="Porto J.I.R."/>
            <person name="Potrich D.P."/>
            <person name="Ramalho-Neto C.E."/>
            <person name="Reis A.M.M."/>
            <person name="Rigo L.U."/>
            <person name="Rondinelli E."/>
            <person name="Santos E.B.P."/>
            <person name="Santos F.R."/>
            <person name="Schneider M.P.C."/>
            <person name="Seuanez H.N."/>
            <person name="Silva A.M.R."/>
            <person name="da Silva A.L.C."/>
            <person name="Silva D.W."/>
            <person name="Silva R."/>
            <person name="Simoes I.C."/>
            <person name="Simon D."/>
            <person name="Soares C.M.A."/>
            <person name="Soares R.B.A."/>
            <person name="Souza E.M."/>
            <person name="Souza K.R.L."/>
            <person name="Souza R.C."/>
            <person name="Steffens M.B.R."/>
            <person name="Steindel M."/>
            <person name="Teixeira S.R."/>
            <person name="Urmenyi T."/>
            <person name="Vettore A."/>
            <person name="Wassem R."/>
            <person name="Zaha A."/>
            <person name="Simpson A.J.G."/>
        </authorList>
    </citation>
    <scope>NUCLEOTIDE SEQUENCE [LARGE SCALE GENOMIC DNA]</scope>
    <source>
        <strain>ATCC 12472 / DSM 30191 / JCM 1249 / CCUG 213 / NBRC 12614 / NCIMB 9131 / NCTC 9757 / MK</strain>
    </source>
</reference>
<evidence type="ECO:0000255" key="1">
    <source>
        <dbReference type="HAMAP-Rule" id="MF_01092"/>
    </source>
</evidence>
<accession>P60012</accession>
<proteinExistence type="inferred from homology"/>
<sequence length="252" mass="28940">MISFEFPVTERTRILLRLEYLYGRLAYFIGKDHPHDHHAALQVLFELMETASRADLKADLLQELERQKQMLEALRDNPNVAEETLEGVLEEIERASSQLLALTGKFGQNLRENEWLMAIKQRAGIPGGTCQFDLPSYHLWQQRSAEVRRQDLRRWAAPLMPTADAAEILLHLLRDSGKTYHYVARKGAFQQMSGGKVVQLIQVAYDDNLELLPELSANKYALNIRFVSAVTGEARPRQTEQDVEFQLTNCKF</sequence>
<organism>
    <name type="scientific">Chromobacterium violaceum (strain ATCC 12472 / DSM 30191 / JCM 1249 / CCUG 213 / NBRC 12614 / NCIMB 9131 / NCTC 9757 / MK)</name>
    <dbReference type="NCBI Taxonomy" id="243365"/>
    <lineage>
        <taxon>Bacteria</taxon>
        <taxon>Pseudomonadati</taxon>
        <taxon>Pseudomonadota</taxon>
        <taxon>Betaproteobacteria</taxon>
        <taxon>Neisseriales</taxon>
        <taxon>Chromobacteriaceae</taxon>
        <taxon>Chromobacterium</taxon>
    </lineage>
</organism>
<protein>
    <recommendedName>
        <fullName evidence="1">Cell division protein ZapD</fullName>
    </recommendedName>
    <alternativeName>
        <fullName evidence="1">Z ring-associated protein D</fullName>
    </alternativeName>
</protein>